<evidence type="ECO:0000255" key="1">
    <source>
        <dbReference type="HAMAP-Rule" id="MF_00246"/>
    </source>
</evidence>
<protein>
    <recommendedName>
        <fullName evidence="1">Galactokinase</fullName>
        <ecNumber evidence="1">2.7.1.6</ecNumber>
    </recommendedName>
    <alternativeName>
        <fullName evidence="1">Galactose kinase</fullName>
    </alternativeName>
</protein>
<gene>
    <name evidence="1" type="primary">galK</name>
    <name type="ordered locus">VP2398</name>
</gene>
<reference key="1">
    <citation type="journal article" date="2003" name="Lancet">
        <title>Genome sequence of Vibrio parahaemolyticus: a pathogenic mechanism distinct from that of V. cholerae.</title>
        <authorList>
            <person name="Makino K."/>
            <person name="Oshima K."/>
            <person name="Kurokawa K."/>
            <person name="Yokoyama K."/>
            <person name="Uda T."/>
            <person name="Tagomori K."/>
            <person name="Iijima Y."/>
            <person name="Najima M."/>
            <person name="Nakano M."/>
            <person name="Yamashita A."/>
            <person name="Kubota Y."/>
            <person name="Kimura S."/>
            <person name="Yasunaga T."/>
            <person name="Honda T."/>
            <person name="Shinagawa H."/>
            <person name="Hattori M."/>
            <person name="Iida T."/>
        </authorList>
    </citation>
    <scope>NUCLEOTIDE SEQUENCE [LARGE SCALE GENOMIC DNA]</scope>
    <source>
        <strain>RIMD 2210633</strain>
    </source>
</reference>
<sequence length="386" mass="42115">MSELIQNVKASFEQVLGYAPSHIIQAPGRVNLIGEHTDYNDGFVLPCAINYQTVVAAAKREDNIVRVVSVDYGNAVDEFDITQAITFQQDKMWANYIRGVVKCLLARGYQFTGADISVSGNVPQGAGLSSSAALEVVIGQTFKVLFNLEISQAEIALNGQQAENEFVGCNCGIMDQMISAEGRENHAMLLDCRSLETEAVSMPEDMAVVIINSNKKRGLVDSEYNTRRQQCEEAARIFGVKALRDVTIEQFNEKVAELDEMVAKRARHVITENDRTVEAAQALRAHDMKRMGELMAESHASMRDDFEITVKEIDTLVEIVKEVIGDQGGVRMTGGGFGGCIVALVPPALVDDVKAEVEAKYQAATGLKESIYVCQAQNGAGLVEVL</sequence>
<dbReference type="EC" id="2.7.1.6" evidence="1"/>
<dbReference type="EMBL" id="BA000031">
    <property type="protein sequence ID" value="BAC60661.1"/>
    <property type="molecule type" value="Genomic_DNA"/>
</dbReference>
<dbReference type="RefSeq" id="NP_798777.1">
    <property type="nucleotide sequence ID" value="NC_004603.1"/>
</dbReference>
<dbReference type="RefSeq" id="WP_005456582.1">
    <property type="nucleotide sequence ID" value="NC_004603.1"/>
</dbReference>
<dbReference type="SMR" id="Q87M60"/>
<dbReference type="GeneID" id="1189911"/>
<dbReference type="KEGG" id="vpa:VP2398"/>
<dbReference type="PATRIC" id="fig|223926.6.peg.2300"/>
<dbReference type="eggNOG" id="COG0153">
    <property type="taxonomic scope" value="Bacteria"/>
</dbReference>
<dbReference type="HOGENOM" id="CLU_017814_2_1_6"/>
<dbReference type="UniPathway" id="UPA00214"/>
<dbReference type="Proteomes" id="UP000002493">
    <property type="component" value="Chromosome 1"/>
</dbReference>
<dbReference type="GO" id="GO:0005829">
    <property type="term" value="C:cytosol"/>
    <property type="evidence" value="ECO:0007669"/>
    <property type="project" value="TreeGrafter"/>
</dbReference>
<dbReference type="GO" id="GO:0005524">
    <property type="term" value="F:ATP binding"/>
    <property type="evidence" value="ECO:0007669"/>
    <property type="project" value="UniProtKB-UniRule"/>
</dbReference>
<dbReference type="GO" id="GO:0004335">
    <property type="term" value="F:galactokinase activity"/>
    <property type="evidence" value="ECO:0007669"/>
    <property type="project" value="UniProtKB-UniRule"/>
</dbReference>
<dbReference type="GO" id="GO:0000287">
    <property type="term" value="F:magnesium ion binding"/>
    <property type="evidence" value="ECO:0007669"/>
    <property type="project" value="UniProtKB-UniRule"/>
</dbReference>
<dbReference type="GO" id="GO:0006012">
    <property type="term" value="P:galactose metabolic process"/>
    <property type="evidence" value="ECO:0007669"/>
    <property type="project" value="UniProtKB-UniRule"/>
</dbReference>
<dbReference type="FunFam" id="3.30.230.10:FF:000017">
    <property type="entry name" value="Galactokinase"/>
    <property type="match status" value="1"/>
</dbReference>
<dbReference type="FunFam" id="3.30.70.890:FF:000001">
    <property type="entry name" value="Galactokinase"/>
    <property type="match status" value="1"/>
</dbReference>
<dbReference type="Gene3D" id="3.30.230.10">
    <property type="match status" value="1"/>
</dbReference>
<dbReference type="Gene3D" id="3.30.70.890">
    <property type="entry name" value="GHMP kinase, C-terminal domain"/>
    <property type="match status" value="1"/>
</dbReference>
<dbReference type="HAMAP" id="MF_00246">
    <property type="entry name" value="Galactokinase"/>
    <property type="match status" value="1"/>
</dbReference>
<dbReference type="InterPro" id="IPR000705">
    <property type="entry name" value="Galactokinase"/>
</dbReference>
<dbReference type="InterPro" id="IPR022963">
    <property type="entry name" value="Galactokinase_bac"/>
</dbReference>
<dbReference type="InterPro" id="IPR019741">
    <property type="entry name" value="Galactokinase_CS"/>
</dbReference>
<dbReference type="InterPro" id="IPR019539">
    <property type="entry name" value="GalKase_N"/>
</dbReference>
<dbReference type="InterPro" id="IPR013750">
    <property type="entry name" value="GHMP_kinase_C_dom"/>
</dbReference>
<dbReference type="InterPro" id="IPR036554">
    <property type="entry name" value="GHMP_kinase_C_sf"/>
</dbReference>
<dbReference type="InterPro" id="IPR006204">
    <property type="entry name" value="GHMP_kinase_N_dom"/>
</dbReference>
<dbReference type="InterPro" id="IPR006203">
    <property type="entry name" value="GHMP_knse_ATP-bd_CS"/>
</dbReference>
<dbReference type="InterPro" id="IPR006206">
    <property type="entry name" value="Mevalonate/galactokinase"/>
</dbReference>
<dbReference type="InterPro" id="IPR020568">
    <property type="entry name" value="Ribosomal_Su5_D2-typ_SF"/>
</dbReference>
<dbReference type="InterPro" id="IPR014721">
    <property type="entry name" value="Ribsml_uS5_D2-typ_fold_subgr"/>
</dbReference>
<dbReference type="NCBIfam" id="TIGR00131">
    <property type="entry name" value="gal_kin"/>
    <property type="match status" value="1"/>
</dbReference>
<dbReference type="NCBIfam" id="NF003472">
    <property type="entry name" value="PRK05101.1"/>
    <property type="match status" value="1"/>
</dbReference>
<dbReference type="NCBIfam" id="NF003705">
    <property type="entry name" value="PRK05322.1"/>
    <property type="match status" value="1"/>
</dbReference>
<dbReference type="PANTHER" id="PTHR10457:SF7">
    <property type="entry name" value="GALACTOKINASE-RELATED"/>
    <property type="match status" value="1"/>
</dbReference>
<dbReference type="PANTHER" id="PTHR10457">
    <property type="entry name" value="MEVALONATE KINASE/GALACTOKINASE"/>
    <property type="match status" value="1"/>
</dbReference>
<dbReference type="Pfam" id="PF10509">
    <property type="entry name" value="GalKase_gal_bdg"/>
    <property type="match status" value="1"/>
</dbReference>
<dbReference type="Pfam" id="PF08544">
    <property type="entry name" value="GHMP_kinases_C"/>
    <property type="match status" value="1"/>
</dbReference>
<dbReference type="Pfam" id="PF00288">
    <property type="entry name" value="GHMP_kinases_N"/>
    <property type="match status" value="1"/>
</dbReference>
<dbReference type="PIRSF" id="PIRSF000530">
    <property type="entry name" value="Galactokinase"/>
    <property type="match status" value="1"/>
</dbReference>
<dbReference type="PRINTS" id="PR00473">
    <property type="entry name" value="GALCTOKINASE"/>
</dbReference>
<dbReference type="PRINTS" id="PR00959">
    <property type="entry name" value="MEVGALKINASE"/>
</dbReference>
<dbReference type="SUPFAM" id="SSF55060">
    <property type="entry name" value="GHMP Kinase, C-terminal domain"/>
    <property type="match status" value="1"/>
</dbReference>
<dbReference type="SUPFAM" id="SSF54211">
    <property type="entry name" value="Ribosomal protein S5 domain 2-like"/>
    <property type="match status" value="1"/>
</dbReference>
<dbReference type="PROSITE" id="PS00106">
    <property type="entry name" value="GALACTOKINASE"/>
    <property type="match status" value="1"/>
</dbReference>
<dbReference type="PROSITE" id="PS00627">
    <property type="entry name" value="GHMP_KINASES_ATP"/>
    <property type="match status" value="1"/>
</dbReference>
<organism>
    <name type="scientific">Vibrio parahaemolyticus serotype O3:K6 (strain RIMD 2210633)</name>
    <dbReference type="NCBI Taxonomy" id="223926"/>
    <lineage>
        <taxon>Bacteria</taxon>
        <taxon>Pseudomonadati</taxon>
        <taxon>Pseudomonadota</taxon>
        <taxon>Gammaproteobacteria</taxon>
        <taxon>Vibrionales</taxon>
        <taxon>Vibrionaceae</taxon>
        <taxon>Vibrio</taxon>
    </lineage>
</organism>
<comment type="function">
    <text evidence="1">Catalyzes the transfer of the gamma-phosphate of ATP to D-galactose to form alpha-D-galactose-1-phosphate (Gal-1-P).</text>
</comment>
<comment type="catalytic activity">
    <reaction evidence="1">
        <text>alpha-D-galactose + ATP = alpha-D-galactose 1-phosphate + ADP + H(+)</text>
        <dbReference type="Rhea" id="RHEA:13553"/>
        <dbReference type="ChEBI" id="CHEBI:15378"/>
        <dbReference type="ChEBI" id="CHEBI:28061"/>
        <dbReference type="ChEBI" id="CHEBI:30616"/>
        <dbReference type="ChEBI" id="CHEBI:58336"/>
        <dbReference type="ChEBI" id="CHEBI:456216"/>
        <dbReference type="EC" id="2.7.1.6"/>
    </reaction>
</comment>
<comment type="pathway">
    <text evidence="1">Carbohydrate metabolism; galactose metabolism.</text>
</comment>
<comment type="subcellular location">
    <subcellularLocation>
        <location evidence="1">Cytoplasm</location>
    </subcellularLocation>
</comment>
<comment type="similarity">
    <text evidence="1">Belongs to the GHMP kinase family. GalK subfamily.</text>
</comment>
<accession>Q87M60</accession>
<keyword id="KW-0067">ATP-binding</keyword>
<keyword id="KW-0119">Carbohydrate metabolism</keyword>
<keyword id="KW-0963">Cytoplasm</keyword>
<keyword id="KW-0299">Galactose metabolism</keyword>
<keyword id="KW-0418">Kinase</keyword>
<keyword id="KW-0460">Magnesium</keyword>
<keyword id="KW-0479">Metal-binding</keyword>
<keyword id="KW-0547">Nucleotide-binding</keyword>
<keyword id="KW-0808">Transferase</keyword>
<feature type="chain" id="PRO_0000184637" description="Galactokinase">
    <location>
        <begin position="1"/>
        <end position="386"/>
    </location>
</feature>
<feature type="active site" description="Proton acceptor" evidence="1">
    <location>
        <position position="175"/>
    </location>
</feature>
<feature type="binding site" evidence="1">
    <location>
        <begin position="35"/>
        <end position="38"/>
    </location>
    <ligand>
        <name>substrate</name>
    </ligand>
</feature>
<feature type="binding site" evidence="1">
    <location>
        <position position="69"/>
    </location>
    <ligand>
        <name>ATP</name>
        <dbReference type="ChEBI" id="CHEBI:30616"/>
    </ligand>
</feature>
<feature type="binding site" evidence="1">
    <location>
        <begin position="125"/>
        <end position="131"/>
    </location>
    <ligand>
        <name>ATP</name>
        <dbReference type="ChEBI" id="CHEBI:30616"/>
    </ligand>
</feature>
<feature type="binding site" evidence="1">
    <location>
        <position position="131"/>
    </location>
    <ligand>
        <name>Mg(2+)</name>
        <dbReference type="ChEBI" id="CHEBI:18420"/>
    </ligand>
</feature>
<feature type="binding site" evidence="1">
    <location>
        <position position="163"/>
    </location>
    <ligand>
        <name>Mg(2+)</name>
        <dbReference type="ChEBI" id="CHEBI:18420"/>
    </ligand>
</feature>
<feature type="binding site" evidence="1">
    <location>
        <position position="224"/>
    </location>
    <ligand>
        <name>substrate</name>
    </ligand>
</feature>
<feature type="site" description="Transition state stabilizer" evidence="1">
    <location>
        <position position="29"/>
    </location>
</feature>
<name>GAL1_VIBPA</name>
<proteinExistence type="inferred from homology"/>